<organism>
    <name type="scientific">Bordetella avium (strain 197N)</name>
    <dbReference type="NCBI Taxonomy" id="360910"/>
    <lineage>
        <taxon>Bacteria</taxon>
        <taxon>Pseudomonadati</taxon>
        <taxon>Pseudomonadota</taxon>
        <taxon>Betaproteobacteria</taxon>
        <taxon>Burkholderiales</taxon>
        <taxon>Alcaligenaceae</taxon>
        <taxon>Bordetella</taxon>
    </lineage>
</organism>
<feature type="chain" id="PRO_1000009298" description="Leucine--tRNA ligase">
    <location>
        <begin position="1"/>
        <end position="885"/>
    </location>
</feature>
<feature type="short sequence motif" description="'HIGH' region">
    <location>
        <begin position="48"/>
        <end position="58"/>
    </location>
</feature>
<feature type="short sequence motif" description="'KMSKS' region">
    <location>
        <begin position="639"/>
        <end position="643"/>
    </location>
</feature>
<feature type="binding site" evidence="1">
    <location>
        <position position="642"/>
    </location>
    <ligand>
        <name>ATP</name>
        <dbReference type="ChEBI" id="CHEBI:30616"/>
    </ligand>
</feature>
<keyword id="KW-0030">Aminoacyl-tRNA synthetase</keyword>
<keyword id="KW-0067">ATP-binding</keyword>
<keyword id="KW-0963">Cytoplasm</keyword>
<keyword id="KW-0436">Ligase</keyword>
<keyword id="KW-0547">Nucleotide-binding</keyword>
<keyword id="KW-0648">Protein biosynthesis</keyword>
<keyword id="KW-1185">Reference proteome</keyword>
<evidence type="ECO:0000255" key="1">
    <source>
        <dbReference type="HAMAP-Rule" id="MF_00049"/>
    </source>
</evidence>
<reference key="1">
    <citation type="journal article" date="2006" name="J. Bacteriol.">
        <title>Comparison of the genome sequence of the poultry pathogen Bordetella avium with those of B. bronchiseptica, B. pertussis, and B. parapertussis reveals extensive diversity in surface structures associated with host interaction.</title>
        <authorList>
            <person name="Sebaihia M."/>
            <person name="Preston A."/>
            <person name="Maskell D.J."/>
            <person name="Kuzmiak H."/>
            <person name="Connell T.D."/>
            <person name="King N.D."/>
            <person name="Orndorff P.E."/>
            <person name="Miyamoto D.M."/>
            <person name="Thomson N.R."/>
            <person name="Harris D."/>
            <person name="Goble A."/>
            <person name="Lord A."/>
            <person name="Murphy L."/>
            <person name="Quail M.A."/>
            <person name="Rutter S."/>
            <person name="Squares R."/>
            <person name="Squares S."/>
            <person name="Woodward J."/>
            <person name="Parkhill J."/>
            <person name="Temple L.M."/>
        </authorList>
    </citation>
    <scope>NUCLEOTIDE SEQUENCE [LARGE SCALE GENOMIC DNA]</scope>
    <source>
        <strain>197N</strain>
    </source>
</reference>
<comment type="catalytic activity">
    <reaction evidence="1">
        <text>tRNA(Leu) + L-leucine + ATP = L-leucyl-tRNA(Leu) + AMP + diphosphate</text>
        <dbReference type="Rhea" id="RHEA:11688"/>
        <dbReference type="Rhea" id="RHEA-COMP:9613"/>
        <dbReference type="Rhea" id="RHEA-COMP:9622"/>
        <dbReference type="ChEBI" id="CHEBI:30616"/>
        <dbReference type="ChEBI" id="CHEBI:33019"/>
        <dbReference type="ChEBI" id="CHEBI:57427"/>
        <dbReference type="ChEBI" id="CHEBI:78442"/>
        <dbReference type="ChEBI" id="CHEBI:78494"/>
        <dbReference type="ChEBI" id="CHEBI:456215"/>
        <dbReference type="EC" id="6.1.1.4"/>
    </reaction>
</comment>
<comment type="subcellular location">
    <subcellularLocation>
        <location evidence="1">Cytoplasm</location>
    </subcellularLocation>
</comment>
<comment type="similarity">
    <text evidence="1">Belongs to the class-I aminoacyl-tRNA synthetase family.</text>
</comment>
<accession>Q2KXE5</accession>
<proteinExistence type="inferred from homology"/>
<name>SYL_BORA1</name>
<dbReference type="EC" id="6.1.1.4" evidence="1"/>
<dbReference type="EMBL" id="AM167904">
    <property type="protein sequence ID" value="CAJ50102.1"/>
    <property type="molecule type" value="Genomic_DNA"/>
</dbReference>
<dbReference type="RefSeq" id="WP_012418149.1">
    <property type="nucleotide sequence ID" value="NC_010645.1"/>
</dbReference>
<dbReference type="SMR" id="Q2KXE5"/>
<dbReference type="STRING" id="360910.BAV2492"/>
<dbReference type="KEGG" id="bav:BAV2492"/>
<dbReference type="eggNOG" id="COG0495">
    <property type="taxonomic scope" value="Bacteria"/>
</dbReference>
<dbReference type="HOGENOM" id="CLU_004427_0_0_4"/>
<dbReference type="OrthoDB" id="9810365at2"/>
<dbReference type="Proteomes" id="UP000001977">
    <property type="component" value="Chromosome"/>
</dbReference>
<dbReference type="GO" id="GO:0005829">
    <property type="term" value="C:cytosol"/>
    <property type="evidence" value="ECO:0007669"/>
    <property type="project" value="TreeGrafter"/>
</dbReference>
<dbReference type="GO" id="GO:0002161">
    <property type="term" value="F:aminoacyl-tRNA deacylase activity"/>
    <property type="evidence" value="ECO:0007669"/>
    <property type="project" value="InterPro"/>
</dbReference>
<dbReference type="GO" id="GO:0005524">
    <property type="term" value="F:ATP binding"/>
    <property type="evidence" value="ECO:0007669"/>
    <property type="project" value="UniProtKB-UniRule"/>
</dbReference>
<dbReference type="GO" id="GO:0004823">
    <property type="term" value="F:leucine-tRNA ligase activity"/>
    <property type="evidence" value="ECO:0007669"/>
    <property type="project" value="UniProtKB-UniRule"/>
</dbReference>
<dbReference type="GO" id="GO:0006429">
    <property type="term" value="P:leucyl-tRNA aminoacylation"/>
    <property type="evidence" value="ECO:0007669"/>
    <property type="project" value="UniProtKB-UniRule"/>
</dbReference>
<dbReference type="CDD" id="cd07958">
    <property type="entry name" value="Anticodon_Ia_Leu_BEm"/>
    <property type="match status" value="1"/>
</dbReference>
<dbReference type="CDD" id="cd00812">
    <property type="entry name" value="LeuRS_core"/>
    <property type="match status" value="1"/>
</dbReference>
<dbReference type="FunFam" id="1.10.730.10:FF:000002">
    <property type="entry name" value="Leucine--tRNA ligase"/>
    <property type="match status" value="1"/>
</dbReference>
<dbReference type="FunFam" id="3.10.20.590:FF:000001">
    <property type="entry name" value="Leucine--tRNA ligase"/>
    <property type="match status" value="1"/>
</dbReference>
<dbReference type="FunFam" id="3.40.50.620:FF:000003">
    <property type="entry name" value="Leucine--tRNA ligase"/>
    <property type="match status" value="1"/>
</dbReference>
<dbReference type="FunFam" id="3.40.50.620:FF:000056">
    <property type="entry name" value="Leucine--tRNA ligase"/>
    <property type="match status" value="1"/>
</dbReference>
<dbReference type="FunFam" id="3.90.740.10:FF:000012">
    <property type="entry name" value="Leucine--tRNA ligase"/>
    <property type="match status" value="1"/>
</dbReference>
<dbReference type="Gene3D" id="2.20.28.290">
    <property type="match status" value="1"/>
</dbReference>
<dbReference type="Gene3D" id="3.10.20.590">
    <property type="match status" value="1"/>
</dbReference>
<dbReference type="Gene3D" id="3.40.50.620">
    <property type="entry name" value="HUPs"/>
    <property type="match status" value="2"/>
</dbReference>
<dbReference type="Gene3D" id="1.10.730.10">
    <property type="entry name" value="Isoleucyl-tRNA Synthetase, Domain 1"/>
    <property type="match status" value="2"/>
</dbReference>
<dbReference type="Gene3D" id="3.90.740.10">
    <property type="entry name" value="Valyl/Leucyl/Isoleucyl-tRNA synthetase, editing domain"/>
    <property type="match status" value="1"/>
</dbReference>
<dbReference type="HAMAP" id="MF_00049_B">
    <property type="entry name" value="Leu_tRNA_synth_B"/>
    <property type="match status" value="1"/>
</dbReference>
<dbReference type="InterPro" id="IPR001412">
    <property type="entry name" value="aa-tRNA-synth_I_CS"/>
</dbReference>
<dbReference type="InterPro" id="IPR002300">
    <property type="entry name" value="aa-tRNA-synth_Ia"/>
</dbReference>
<dbReference type="InterPro" id="IPR002302">
    <property type="entry name" value="Leu-tRNA-ligase"/>
</dbReference>
<dbReference type="InterPro" id="IPR025709">
    <property type="entry name" value="Leu_tRNA-synth_edit"/>
</dbReference>
<dbReference type="InterPro" id="IPR013155">
    <property type="entry name" value="M/V/L/I-tRNA-synth_anticd-bd"/>
</dbReference>
<dbReference type="InterPro" id="IPR015413">
    <property type="entry name" value="Methionyl/Leucyl_tRNA_Synth"/>
</dbReference>
<dbReference type="InterPro" id="IPR014729">
    <property type="entry name" value="Rossmann-like_a/b/a_fold"/>
</dbReference>
<dbReference type="InterPro" id="IPR009080">
    <property type="entry name" value="tRNAsynth_Ia_anticodon-bd"/>
</dbReference>
<dbReference type="InterPro" id="IPR009008">
    <property type="entry name" value="Val/Leu/Ile-tRNA-synth_edit"/>
</dbReference>
<dbReference type="NCBIfam" id="TIGR00396">
    <property type="entry name" value="leuS_bact"/>
    <property type="match status" value="1"/>
</dbReference>
<dbReference type="PANTHER" id="PTHR43740:SF2">
    <property type="entry name" value="LEUCINE--TRNA LIGASE, MITOCHONDRIAL"/>
    <property type="match status" value="1"/>
</dbReference>
<dbReference type="PANTHER" id="PTHR43740">
    <property type="entry name" value="LEUCYL-TRNA SYNTHETASE"/>
    <property type="match status" value="1"/>
</dbReference>
<dbReference type="Pfam" id="PF08264">
    <property type="entry name" value="Anticodon_1"/>
    <property type="match status" value="1"/>
</dbReference>
<dbReference type="Pfam" id="PF00133">
    <property type="entry name" value="tRNA-synt_1"/>
    <property type="match status" value="1"/>
</dbReference>
<dbReference type="Pfam" id="PF13603">
    <property type="entry name" value="tRNA-synt_1_2"/>
    <property type="match status" value="1"/>
</dbReference>
<dbReference type="Pfam" id="PF09334">
    <property type="entry name" value="tRNA-synt_1g"/>
    <property type="match status" value="1"/>
</dbReference>
<dbReference type="PRINTS" id="PR00985">
    <property type="entry name" value="TRNASYNTHLEU"/>
</dbReference>
<dbReference type="SUPFAM" id="SSF47323">
    <property type="entry name" value="Anticodon-binding domain of a subclass of class I aminoacyl-tRNA synthetases"/>
    <property type="match status" value="1"/>
</dbReference>
<dbReference type="SUPFAM" id="SSF52374">
    <property type="entry name" value="Nucleotidylyl transferase"/>
    <property type="match status" value="1"/>
</dbReference>
<dbReference type="SUPFAM" id="SSF50677">
    <property type="entry name" value="ValRS/IleRS/LeuRS editing domain"/>
    <property type="match status" value="1"/>
</dbReference>
<dbReference type="PROSITE" id="PS00178">
    <property type="entry name" value="AA_TRNA_LIGASE_I"/>
    <property type="match status" value="1"/>
</dbReference>
<gene>
    <name evidence="1" type="primary">leuS</name>
    <name type="ordered locus">BAV2492</name>
</gene>
<protein>
    <recommendedName>
        <fullName evidence="1">Leucine--tRNA ligase</fullName>
        <ecNumber evidence="1">6.1.1.4</ecNumber>
    </recommendedName>
    <alternativeName>
        <fullName evidence="1">Leucyl-tRNA synthetase</fullName>
        <shortName evidence="1">LeuRS</shortName>
    </alternativeName>
</protein>
<sequence length="885" mass="99022">MQERYQPNLVEAAAQQDWQARDAYLVHESAKNADGSEKPKFYACSMLPYPSGKLHMGHVRNYTINDMMARQLRMRGYNVLMPMGWDAFGMPAENAAIKSKVPPAKWTYDNIAYMKKQMKAMGLAIDWSREMCACDPAYYKWNQWLFLKMLEKGIAYRKTQVVNWDPVDQTVLANEQVIDGRGWRSGAPVEKREIPGYYLRITDYADELLDQVKNGLPGWPERVRVMQENWIGKSEGVRLAFPHDIKDENGQLIQDGKLFVFTTRADTVMGVTFCAVAPEHPLATLAARNNPALATFIEQCKLGGTTEAEIATREKEGIPTGLSVKHPLTGQAVDLWVGNYVLMSYGDGAVMGVPAHDERDFAFARKYGLTIRQVIAQEGKTYSDQAWQEWYGDKQTGRTINSGKYDGLSTAEAVDAIAADLNALGLGEKQTTYRLRDWGISRQRYWGTPIPIIHCQDCGPVPVPEQDLPVVLPDDLIPDGSGNPLAKNEAFLSCSCPACGKPARRETDTMDTFVDSSWYFMRYTSPGNDQAMVDKRNDYWMPMDQYIGGIEHAVLHLLYARFWTKVMRDLGMLKFDEPFTRLLCQGMVLNHIYSRRTPQGGIEYFWPEEVENIYDAKGAIVGARLKSDGSEITYGGVGTMSKSKNNGVDPQSLIDTLGADTARLFVMFASPPEQTLEWSDSGVDGANRFLRRLWALAYDRRAAVARGLASGYAWQDAPAPVKDLRRELYGLLKQAEYDYQRIQYNTVVSASMKMLNAIDNAQLPEGPAADAAIAEGLGLLLRVLYPVVPHVTWHIWRDLGYAAELGDLLDAPWPHVDEAALIADEIELMLQVNGKLRGAIRVAAQAAKEDIEKIAVAQEEVARFLEGRPPKRVIVVPGKLVNVVG</sequence>